<reference key="1">
    <citation type="journal article" date="2002" name="J. Bacteriol.">
        <title>Whole-genome comparison of Mycobacterium tuberculosis clinical and laboratory strains.</title>
        <authorList>
            <person name="Fleischmann R.D."/>
            <person name="Alland D."/>
            <person name="Eisen J.A."/>
            <person name="Carpenter L."/>
            <person name="White O."/>
            <person name="Peterson J.D."/>
            <person name="DeBoy R.T."/>
            <person name="Dodson R.J."/>
            <person name="Gwinn M.L."/>
            <person name="Haft D.H."/>
            <person name="Hickey E.K."/>
            <person name="Kolonay J.F."/>
            <person name="Nelson W.C."/>
            <person name="Umayam L.A."/>
            <person name="Ermolaeva M.D."/>
            <person name="Salzberg S.L."/>
            <person name="Delcher A."/>
            <person name="Utterback T.R."/>
            <person name="Weidman J.F."/>
            <person name="Khouri H.M."/>
            <person name="Gill J."/>
            <person name="Mikula A."/>
            <person name="Bishai W."/>
            <person name="Jacobs W.R. Jr."/>
            <person name="Venter J.C."/>
            <person name="Fraser C.M."/>
        </authorList>
    </citation>
    <scope>NUCLEOTIDE SEQUENCE [LARGE SCALE GENOMIC DNA]</scope>
    <source>
        <strain>CDC 1551 / Oshkosh</strain>
    </source>
</reference>
<sequence length="360" mass="37322">MTVPPTATHQPWPGVIAAYRDRLPVGDDWTPVTLLEGGTPLIAATNLSKQTGCTIHLKVEGLNPTGSFKDRGMTMAVTDALAHGQRAVLCASTGNTSASAAAYAARAGITCAVLIPQGKIAMGKLAQAVMHGAKIIQIDGNFDDCLELARKMAADFPTISLVNSVNPVRIEGQKTAAFEIVDVLGTAPDVHALPVGNAGNITAYWKGYTEYHQLGLIDKLPRMLGTQAAGAAPLVLGEPVSHPETIATAIRIGSPASWTSAVEAQQQSKGRFLAASDEEILAAYHLVARVEGVFVEPASAASIAGLLKAIDDGWVARGSTVVCTVTGNGLKDPDTALKDMPSVSPVPVDPVAVVEKLGLA</sequence>
<dbReference type="EC" id="4.2.3.1"/>
<dbReference type="EMBL" id="AE000516">
    <property type="protein sequence ID" value="AAK45596.1"/>
    <property type="molecule type" value="Genomic_DNA"/>
</dbReference>
<dbReference type="PIR" id="C70773">
    <property type="entry name" value="C70773"/>
</dbReference>
<dbReference type="RefSeq" id="WP_003406652.1">
    <property type="nucleotide sequence ID" value="NZ_KK341227.1"/>
</dbReference>
<dbReference type="SMR" id="P9WG58"/>
<dbReference type="GeneID" id="45425269"/>
<dbReference type="KEGG" id="mtc:MT1334"/>
<dbReference type="PATRIC" id="fig|83331.31.peg.1440"/>
<dbReference type="HOGENOM" id="CLU_028142_0_0_11"/>
<dbReference type="UniPathway" id="UPA00050">
    <property type="reaction ID" value="UER00065"/>
</dbReference>
<dbReference type="Proteomes" id="UP000001020">
    <property type="component" value="Chromosome"/>
</dbReference>
<dbReference type="GO" id="GO:0003941">
    <property type="term" value="F:L-serine ammonia-lyase activity"/>
    <property type="evidence" value="ECO:0007669"/>
    <property type="project" value="TreeGrafter"/>
</dbReference>
<dbReference type="GO" id="GO:0030170">
    <property type="term" value="F:pyridoxal phosphate binding"/>
    <property type="evidence" value="ECO:0007669"/>
    <property type="project" value="InterPro"/>
</dbReference>
<dbReference type="GO" id="GO:0004794">
    <property type="term" value="F:threonine deaminase activity"/>
    <property type="evidence" value="ECO:0007669"/>
    <property type="project" value="TreeGrafter"/>
</dbReference>
<dbReference type="GO" id="GO:0004795">
    <property type="term" value="F:threonine synthase activity"/>
    <property type="evidence" value="ECO:0007669"/>
    <property type="project" value="UniProtKB-EC"/>
</dbReference>
<dbReference type="GO" id="GO:0009097">
    <property type="term" value="P:isoleucine biosynthetic process"/>
    <property type="evidence" value="ECO:0007669"/>
    <property type="project" value="TreeGrafter"/>
</dbReference>
<dbReference type="GO" id="GO:0006565">
    <property type="term" value="P:L-serine catabolic process"/>
    <property type="evidence" value="ECO:0007669"/>
    <property type="project" value="TreeGrafter"/>
</dbReference>
<dbReference type="GO" id="GO:0009088">
    <property type="term" value="P:threonine biosynthetic process"/>
    <property type="evidence" value="ECO:0007669"/>
    <property type="project" value="UniProtKB-UniPathway"/>
</dbReference>
<dbReference type="GO" id="GO:0006567">
    <property type="term" value="P:threonine catabolic process"/>
    <property type="evidence" value="ECO:0007669"/>
    <property type="project" value="TreeGrafter"/>
</dbReference>
<dbReference type="CDD" id="cd01563">
    <property type="entry name" value="Thr-synth_1"/>
    <property type="match status" value="1"/>
</dbReference>
<dbReference type="FunFam" id="3.40.50.1100:FF:000014">
    <property type="entry name" value="Threonine synthase"/>
    <property type="match status" value="1"/>
</dbReference>
<dbReference type="Gene3D" id="3.40.50.1100">
    <property type="match status" value="2"/>
</dbReference>
<dbReference type="InterPro" id="IPR050147">
    <property type="entry name" value="Ser/Thr_Dehydratase"/>
</dbReference>
<dbReference type="InterPro" id="IPR000634">
    <property type="entry name" value="Ser/Thr_deHydtase_PyrdxlP-BS"/>
</dbReference>
<dbReference type="InterPro" id="IPR004450">
    <property type="entry name" value="Thr_synthase-like"/>
</dbReference>
<dbReference type="InterPro" id="IPR026260">
    <property type="entry name" value="Thr_Synthase_bac/arc"/>
</dbReference>
<dbReference type="InterPro" id="IPR001926">
    <property type="entry name" value="TrpB-like_PALP"/>
</dbReference>
<dbReference type="InterPro" id="IPR036052">
    <property type="entry name" value="TrpB-like_PALP_sf"/>
</dbReference>
<dbReference type="NCBIfam" id="TIGR00260">
    <property type="entry name" value="thrC"/>
    <property type="match status" value="1"/>
</dbReference>
<dbReference type="PANTHER" id="PTHR48078:SF6">
    <property type="entry name" value="L-THREONINE DEHYDRATASE CATABOLIC TDCB"/>
    <property type="match status" value="1"/>
</dbReference>
<dbReference type="PANTHER" id="PTHR48078">
    <property type="entry name" value="THREONINE DEHYDRATASE, MITOCHONDRIAL-RELATED"/>
    <property type="match status" value="1"/>
</dbReference>
<dbReference type="Pfam" id="PF00291">
    <property type="entry name" value="PALP"/>
    <property type="match status" value="1"/>
</dbReference>
<dbReference type="PIRSF" id="PIRSF038945">
    <property type="entry name" value="Thr_synthase"/>
    <property type="match status" value="1"/>
</dbReference>
<dbReference type="SUPFAM" id="SSF53686">
    <property type="entry name" value="Tryptophan synthase beta subunit-like PLP-dependent enzymes"/>
    <property type="match status" value="1"/>
</dbReference>
<dbReference type="PROSITE" id="PS00165">
    <property type="entry name" value="DEHYDRATASE_SER_THR"/>
    <property type="match status" value="1"/>
</dbReference>
<protein>
    <recommendedName>
        <fullName>Threonine synthase</fullName>
        <shortName>TS</shortName>
        <ecNumber>4.2.3.1</ecNumber>
    </recommendedName>
</protein>
<accession>P9WG58</accession>
<accession>L0T6F8</accession>
<accession>P66902</accession>
<accession>Q10610</accession>
<name>THRC_MYCTO</name>
<proteinExistence type="inferred from homology"/>
<keyword id="KW-0028">Amino-acid biosynthesis</keyword>
<keyword id="KW-0456">Lyase</keyword>
<keyword id="KW-0663">Pyridoxal phosphate</keyword>
<keyword id="KW-1185">Reference proteome</keyword>
<keyword id="KW-0791">Threonine biosynthesis</keyword>
<feature type="chain" id="PRO_0000428419" description="Threonine synthase">
    <location>
        <begin position="1"/>
        <end position="360"/>
    </location>
</feature>
<feature type="binding site" evidence="1">
    <location>
        <position position="95"/>
    </location>
    <ligand>
        <name>pyridoxal 5'-phosphate</name>
        <dbReference type="ChEBI" id="CHEBI:597326"/>
    </ligand>
</feature>
<feature type="binding site" evidence="1">
    <location>
        <begin position="196"/>
        <end position="200"/>
    </location>
    <ligand>
        <name>pyridoxal 5'-phosphate</name>
        <dbReference type="ChEBI" id="CHEBI:597326"/>
    </ligand>
</feature>
<feature type="binding site" evidence="1">
    <location>
        <position position="326"/>
    </location>
    <ligand>
        <name>pyridoxal 5'-phosphate</name>
        <dbReference type="ChEBI" id="CHEBI:597326"/>
    </ligand>
</feature>
<feature type="modified residue" description="N6-(pyridoxal phosphate)lysine" evidence="1">
    <location>
        <position position="69"/>
    </location>
</feature>
<gene>
    <name type="primary">thrC</name>
    <name type="ordered locus">MT1334</name>
</gene>
<comment type="function">
    <text evidence="1">Catalyzes the gamma-elimination of phosphate from L-phosphohomoserine and the beta-addition of water to produce L-threonine.</text>
</comment>
<comment type="catalytic activity">
    <reaction>
        <text>O-phospho-L-homoserine + H2O = L-threonine + phosphate</text>
        <dbReference type="Rhea" id="RHEA:10840"/>
        <dbReference type="ChEBI" id="CHEBI:15377"/>
        <dbReference type="ChEBI" id="CHEBI:43474"/>
        <dbReference type="ChEBI" id="CHEBI:57590"/>
        <dbReference type="ChEBI" id="CHEBI:57926"/>
        <dbReference type="EC" id="4.2.3.1"/>
    </reaction>
</comment>
<comment type="cofactor">
    <cofactor evidence="1">
        <name>pyridoxal 5'-phosphate</name>
        <dbReference type="ChEBI" id="CHEBI:597326"/>
    </cofactor>
</comment>
<comment type="pathway">
    <text>Amino-acid biosynthesis; L-threonine biosynthesis; L-threonine from L-aspartate: step 5/5.</text>
</comment>
<comment type="subunit">
    <text evidence="1">Homodimer.</text>
</comment>
<comment type="similarity">
    <text evidence="2">Belongs to the threonine synthase family.</text>
</comment>
<evidence type="ECO:0000250" key="1"/>
<evidence type="ECO:0000305" key="2"/>
<organism>
    <name type="scientific">Mycobacterium tuberculosis (strain CDC 1551 / Oshkosh)</name>
    <dbReference type="NCBI Taxonomy" id="83331"/>
    <lineage>
        <taxon>Bacteria</taxon>
        <taxon>Bacillati</taxon>
        <taxon>Actinomycetota</taxon>
        <taxon>Actinomycetes</taxon>
        <taxon>Mycobacteriales</taxon>
        <taxon>Mycobacteriaceae</taxon>
        <taxon>Mycobacterium</taxon>
        <taxon>Mycobacterium tuberculosis complex</taxon>
    </lineage>
</organism>